<reference key="1">
    <citation type="journal article" date="2005" name="Genome Res.">
        <title>Sequence, annotation, and analysis of synteny between rice chromosome 3 and diverged grass species.</title>
        <authorList>
            <consortium name="The rice chromosome 3 sequencing consortium"/>
            <person name="Buell C.R."/>
            <person name="Yuan Q."/>
            <person name="Ouyang S."/>
            <person name="Liu J."/>
            <person name="Zhu W."/>
            <person name="Wang A."/>
            <person name="Maiti R."/>
            <person name="Haas B."/>
            <person name="Wortman J."/>
            <person name="Pertea M."/>
            <person name="Jones K.M."/>
            <person name="Kim M."/>
            <person name="Overton L."/>
            <person name="Tsitrin T."/>
            <person name="Fadrosh D."/>
            <person name="Bera J."/>
            <person name="Weaver B."/>
            <person name="Jin S."/>
            <person name="Johri S."/>
            <person name="Reardon M."/>
            <person name="Webb K."/>
            <person name="Hill J."/>
            <person name="Moffat K."/>
            <person name="Tallon L."/>
            <person name="Van Aken S."/>
            <person name="Lewis M."/>
            <person name="Utterback T."/>
            <person name="Feldblyum T."/>
            <person name="Zismann V."/>
            <person name="Iobst S."/>
            <person name="Hsiao J."/>
            <person name="de Vazeille A.R."/>
            <person name="Salzberg S.L."/>
            <person name="White O."/>
            <person name="Fraser C.M."/>
            <person name="Yu Y."/>
            <person name="Kim H."/>
            <person name="Rambo T."/>
            <person name="Currie J."/>
            <person name="Collura K."/>
            <person name="Kernodle-Thompson S."/>
            <person name="Wei F."/>
            <person name="Kudrna K."/>
            <person name="Ammiraju J.S.S."/>
            <person name="Luo M."/>
            <person name="Goicoechea J.L."/>
            <person name="Wing R.A."/>
            <person name="Henry D."/>
            <person name="Oates R."/>
            <person name="Palmer M."/>
            <person name="Pries G."/>
            <person name="Saski C."/>
            <person name="Simmons J."/>
            <person name="Soderlund C."/>
            <person name="Nelson W."/>
            <person name="de la Bastide M."/>
            <person name="Spiegel L."/>
            <person name="Nascimento L."/>
            <person name="Huang E."/>
            <person name="Preston R."/>
            <person name="Zutavern T."/>
            <person name="Palmer L."/>
            <person name="O'Shaughnessy A."/>
            <person name="Dike S."/>
            <person name="McCombie W.R."/>
            <person name="Minx P."/>
            <person name="Cordum H."/>
            <person name="Wilson R."/>
            <person name="Jin W."/>
            <person name="Lee H.R."/>
            <person name="Jiang J."/>
            <person name="Jackson S."/>
        </authorList>
    </citation>
    <scope>NUCLEOTIDE SEQUENCE [LARGE SCALE GENOMIC DNA]</scope>
    <source>
        <strain>cv. Nipponbare</strain>
    </source>
</reference>
<reference key="2">
    <citation type="journal article" date="2005" name="Nature">
        <title>The map-based sequence of the rice genome.</title>
        <authorList>
            <consortium name="International rice genome sequencing project (IRGSP)"/>
        </authorList>
    </citation>
    <scope>NUCLEOTIDE SEQUENCE [LARGE SCALE GENOMIC DNA]</scope>
    <source>
        <strain>cv. Nipponbare</strain>
    </source>
</reference>
<reference key="3">
    <citation type="journal article" date="2008" name="Nucleic Acids Res.">
        <title>The rice annotation project database (RAP-DB): 2008 update.</title>
        <authorList>
            <consortium name="The rice annotation project (RAP)"/>
        </authorList>
    </citation>
    <scope>GENOME REANNOTATION</scope>
    <source>
        <strain>cv. Nipponbare</strain>
    </source>
</reference>
<reference key="4">
    <citation type="journal article" date="2013" name="Rice">
        <title>Improvement of the Oryza sativa Nipponbare reference genome using next generation sequence and optical map data.</title>
        <authorList>
            <person name="Kawahara Y."/>
            <person name="de la Bastide M."/>
            <person name="Hamilton J.P."/>
            <person name="Kanamori H."/>
            <person name="McCombie W.R."/>
            <person name="Ouyang S."/>
            <person name="Schwartz D.C."/>
            <person name="Tanaka T."/>
            <person name="Wu J."/>
            <person name="Zhou S."/>
            <person name="Childs K.L."/>
            <person name="Davidson R.M."/>
            <person name="Lin H."/>
            <person name="Quesada-Ocampo L."/>
            <person name="Vaillancourt B."/>
            <person name="Sakai H."/>
            <person name="Lee S.S."/>
            <person name="Kim J."/>
            <person name="Numa H."/>
            <person name="Itoh T."/>
            <person name="Buell C.R."/>
            <person name="Matsumoto T."/>
        </authorList>
    </citation>
    <scope>GENOME REANNOTATION</scope>
    <source>
        <strain>cv. Nipponbare</strain>
    </source>
</reference>
<reference key="5">
    <citation type="submission" date="2007-09" db="EMBL/GenBank/DDBJ databases">
        <title>Oryza sativa full length cDNA.</title>
        <authorList>
            <consortium name="The rice full-length cDNA consortium"/>
        </authorList>
    </citation>
    <scope>NUCLEOTIDE SEQUENCE [LARGE SCALE MRNA]</scope>
    <source>
        <strain>cv. Nipponbare</strain>
    </source>
</reference>
<evidence type="ECO:0000250" key="1"/>
<evidence type="ECO:0000256" key="2">
    <source>
        <dbReference type="SAM" id="MobiDB-lite"/>
    </source>
</evidence>
<evidence type="ECO:0000305" key="3"/>
<organism>
    <name type="scientific">Oryza sativa subsp. japonica</name>
    <name type="common">Rice</name>
    <dbReference type="NCBI Taxonomy" id="39947"/>
    <lineage>
        <taxon>Eukaryota</taxon>
        <taxon>Viridiplantae</taxon>
        <taxon>Streptophyta</taxon>
        <taxon>Embryophyta</taxon>
        <taxon>Tracheophyta</taxon>
        <taxon>Spermatophyta</taxon>
        <taxon>Magnoliopsida</taxon>
        <taxon>Liliopsida</taxon>
        <taxon>Poales</taxon>
        <taxon>Poaceae</taxon>
        <taxon>BOP clade</taxon>
        <taxon>Oryzoideae</taxon>
        <taxon>Oryzeae</taxon>
        <taxon>Oryzinae</taxon>
        <taxon>Oryza</taxon>
        <taxon>Oryza sativa</taxon>
    </lineage>
</organism>
<proteinExistence type="evidence at transcript level"/>
<feature type="chain" id="PRO_0000363661" description="Probable serine acetyltransferase 4">
    <location>
        <begin position="1"/>
        <end position="315"/>
    </location>
</feature>
<feature type="region of interest" description="Disordered" evidence="2">
    <location>
        <begin position="287"/>
        <end position="315"/>
    </location>
</feature>
<feature type="sequence conflict" description="In Ref. 5; AK288017." evidence="3" ref="5">
    <original>A</original>
    <variation>T</variation>
    <location>
        <position position="123"/>
    </location>
</feature>
<protein>
    <recommendedName>
        <fullName>Probable serine acetyltransferase 4</fullName>
        <ecNumber>2.3.1.30</ecNumber>
    </recommendedName>
    <alternativeName>
        <fullName>OsSERAT2;2</fullName>
    </alternativeName>
</protein>
<keyword id="KW-0012">Acyltransferase</keyword>
<keyword id="KW-0028">Amino-acid biosynthesis</keyword>
<keyword id="KW-1185">Reference proteome</keyword>
<keyword id="KW-0808">Transferase</keyword>
<dbReference type="EC" id="2.3.1.30"/>
<dbReference type="EMBL" id="DP000009">
    <property type="protein sequence ID" value="ABF94457.1"/>
    <property type="molecule type" value="Genomic_DNA"/>
</dbReference>
<dbReference type="EMBL" id="AP008209">
    <property type="protein sequence ID" value="BAF11179.2"/>
    <property type="molecule type" value="Genomic_DNA"/>
</dbReference>
<dbReference type="EMBL" id="AP014959">
    <property type="protein sequence ID" value="BAS82773.1"/>
    <property type="molecule type" value="Genomic_DNA"/>
</dbReference>
<dbReference type="EMBL" id="AK288017">
    <property type="status" value="NOT_ANNOTATED_CDS"/>
    <property type="molecule type" value="mRNA"/>
</dbReference>
<dbReference type="RefSeq" id="XP_015631062.1">
    <property type="nucleotide sequence ID" value="XM_015775576.1"/>
</dbReference>
<dbReference type="SMR" id="Q10QH1"/>
<dbReference type="FunCoup" id="Q10QH1">
    <property type="interactions" value="375"/>
</dbReference>
<dbReference type="STRING" id="39947.Q10QH1"/>
<dbReference type="PaxDb" id="39947-Q10QH1"/>
<dbReference type="EnsemblPlants" id="Os03t0196600-01">
    <property type="protein sequence ID" value="Os03t0196600-01"/>
    <property type="gene ID" value="Os03g0196600"/>
</dbReference>
<dbReference type="Gramene" id="Os03t0196600-01">
    <property type="protein sequence ID" value="Os03t0196600-01"/>
    <property type="gene ID" value="Os03g0196600"/>
</dbReference>
<dbReference type="KEGG" id="dosa:Os03g0196600"/>
<dbReference type="eggNOG" id="KOG4750">
    <property type="taxonomic scope" value="Eukaryota"/>
</dbReference>
<dbReference type="HOGENOM" id="CLU_051638_0_1_1"/>
<dbReference type="InParanoid" id="Q10QH1"/>
<dbReference type="OMA" id="HCTVAGV"/>
<dbReference type="OrthoDB" id="25818at2759"/>
<dbReference type="PlantReactome" id="R-OSA-1119331">
    <property type="pathway name" value="Cysteine biosynthesis I"/>
</dbReference>
<dbReference type="UniPathway" id="UPA00136">
    <property type="reaction ID" value="UER00199"/>
</dbReference>
<dbReference type="Proteomes" id="UP000000763">
    <property type="component" value="Chromosome 3"/>
</dbReference>
<dbReference type="Proteomes" id="UP000059680">
    <property type="component" value="Chromosome 3"/>
</dbReference>
<dbReference type="GO" id="GO:0005829">
    <property type="term" value="C:cytosol"/>
    <property type="evidence" value="ECO:0000318"/>
    <property type="project" value="GO_Central"/>
</dbReference>
<dbReference type="GO" id="GO:0009001">
    <property type="term" value="F:serine O-acetyltransferase activity"/>
    <property type="evidence" value="ECO:0000318"/>
    <property type="project" value="GO_Central"/>
</dbReference>
<dbReference type="GO" id="GO:0006535">
    <property type="term" value="P:cysteine biosynthetic process from serine"/>
    <property type="evidence" value="ECO:0007669"/>
    <property type="project" value="InterPro"/>
</dbReference>
<dbReference type="CDD" id="cd03354">
    <property type="entry name" value="LbH_SAT"/>
    <property type="match status" value="1"/>
</dbReference>
<dbReference type="FunFam" id="1.10.3130.10:FF:000008">
    <property type="entry name" value="Probable serine acetyltransferase 4"/>
    <property type="match status" value="1"/>
</dbReference>
<dbReference type="FunFam" id="2.160.10.10:FF:000002">
    <property type="entry name" value="Serine acetyltransferase"/>
    <property type="match status" value="1"/>
</dbReference>
<dbReference type="Gene3D" id="2.160.10.10">
    <property type="entry name" value="Hexapeptide repeat proteins"/>
    <property type="match status" value="1"/>
</dbReference>
<dbReference type="Gene3D" id="1.10.3130.10">
    <property type="entry name" value="serine acetyltransferase, domain 1"/>
    <property type="match status" value="1"/>
</dbReference>
<dbReference type="InterPro" id="IPR001451">
    <property type="entry name" value="Hexapep"/>
</dbReference>
<dbReference type="InterPro" id="IPR018357">
    <property type="entry name" value="Hexapep_transf_CS"/>
</dbReference>
<dbReference type="InterPro" id="IPR045304">
    <property type="entry name" value="LbH_SAT"/>
</dbReference>
<dbReference type="InterPro" id="IPR010493">
    <property type="entry name" value="Ser_AcTrfase_N"/>
</dbReference>
<dbReference type="InterPro" id="IPR042122">
    <property type="entry name" value="Ser_AcTrfase_N_sf"/>
</dbReference>
<dbReference type="InterPro" id="IPR005881">
    <property type="entry name" value="Ser_O-AcTrfase"/>
</dbReference>
<dbReference type="InterPro" id="IPR053376">
    <property type="entry name" value="Serine_acetyltransferase"/>
</dbReference>
<dbReference type="InterPro" id="IPR011004">
    <property type="entry name" value="Trimer_LpxA-like_sf"/>
</dbReference>
<dbReference type="NCBIfam" id="TIGR01172">
    <property type="entry name" value="cysE"/>
    <property type="match status" value="1"/>
</dbReference>
<dbReference type="NCBIfam" id="NF041874">
    <property type="entry name" value="EPS_EpsC"/>
    <property type="match status" value="1"/>
</dbReference>
<dbReference type="PANTHER" id="PTHR42811">
    <property type="entry name" value="SERINE ACETYLTRANSFERASE"/>
    <property type="match status" value="1"/>
</dbReference>
<dbReference type="Pfam" id="PF00132">
    <property type="entry name" value="Hexapep"/>
    <property type="match status" value="1"/>
</dbReference>
<dbReference type="Pfam" id="PF06426">
    <property type="entry name" value="SATase_N"/>
    <property type="match status" value="1"/>
</dbReference>
<dbReference type="SMART" id="SM00971">
    <property type="entry name" value="SATase_N"/>
    <property type="match status" value="1"/>
</dbReference>
<dbReference type="SUPFAM" id="SSF51161">
    <property type="entry name" value="Trimeric LpxA-like enzymes"/>
    <property type="match status" value="1"/>
</dbReference>
<dbReference type="PROSITE" id="PS00101">
    <property type="entry name" value="HEXAPEP_TRANSFERASES"/>
    <property type="match status" value="1"/>
</dbReference>
<sequence>MAACVDKWPPAAYLCRLPEKFYCVLPDCTATDRPVVTASAAPAPAASGSSGDYVWDVLRAEAQDDADDEPLLRKFYHDLVLSRPSLESALASLLAAKLCIPGALPQDQLRDLLAGALAAHPEAGRAARADLVAARDRDPACAKMVHCFLYYKGFLALQAHRAAHALWSDNRRAPALLLQSRASEVFGVDIHPGARIGCGILLDHATGVVIGETAVVGYDVSILHGVTLGGTGKESGDRHPKVGDGVLIGAGASVLGNVHIGDGAKIGAGAVVLRDVADGTTAVGNPAKPIIGKKAAPQRRPEELPGVTMEQRWSD</sequence>
<comment type="catalytic activity">
    <reaction>
        <text>L-serine + acetyl-CoA = O-acetyl-L-serine + CoA</text>
        <dbReference type="Rhea" id="RHEA:24560"/>
        <dbReference type="ChEBI" id="CHEBI:33384"/>
        <dbReference type="ChEBI" id="CHEBI:57287"/>
        <dbReference type="ChEBI" id="CHEBI:57288"/>
        <dbReference type="ChEBI" id="CHEBI:58340"/>
        <dbReference type="EC" id="2.3.1.30"/>
    </reaction>
</comment>
<comment type="pathway">
    <text>Amino-acid biosynthesis; L-cysteine biosynthesis; L-cysteine from L-serine: step 1/2.</text>
</comment>
<comment type="subunit">
    <text evidence="1">Homomultimer.</text>
</comment>
<comment type="similarity">
    <text evidence="3">Belongs to the transferase hexapeptide repeat family.</text>
</comment>
<name>SAT4_ORYSJ</name>
<gene>
    <name type="primary">SAT4</name>
    <name type="ordered locus">Os03g0196600</name>
    <name type="ordered locus">LOC_Os03g10050</name>
</gene>
<accession>Q10QH1</accession>
<accession>A0A0P0VU97</accession>
<accession>Q0DUA9</accession>